<gene>
    <name type="ordered locus">MJ0489</name>
</gene>
<name>Y489_METJA</name>
<sequence length="268" mass="30532">MGCGIMKYGITEMVKTIDTKTRVVDVTNEIAKKKYQAIRDFLEGEEFKEVVIFGVYLWGNYTAQMLSKYADKVYLVDIHEFMKGFVPNNNSIKFLNLNEFKLKFIRGEVNPDLIVDLTGLGGIEPEFLAKFNPKVFIVEDPKGVFDVDIYEADNTYKRTAPFIEKAKVGVLKTYRKARVSKTSGTMTLTIDTIVDASREITSLDGVLYAIPNLRYYEGILFHENDIHKFLSEISQPAITISTLNDVLDEAEEILSNNINLIYSFVEEL</sequence>
<protein>
    <recommendedName>
        <fullName>Uncharacterized protein MJ0489</fullName>
    </recommendedName>
</protein>
<feature type="chain" id="PRO_0000106895" description="Uncharacterized protein MJ0489">
    <location>
        <begin position="1"/>
        <end position="268"/>
    </location>
</feature>
<feature type="strand" evidence="1">
    <location>
        <begin position="15"/>
        <end position="18"/>
    </location>
</feature>
<feature type="strand" evidence="1">
    <location>
        <begin position="20"/>
        <end position="22"/>
    </location>
</feature>
<feature type="helix" evidence="1">
    <location>
        <begin position="23"/>
        <end position="42"/>
    </location>
</feature>
<feature type="strand" evidence="1">
    <location>
        <begin position="47"/>
        <end position="53"/>
    </location>
</feature>
<feature type="turn" evidence="1">
    <location>
        <begin position="56"/>
        <end position="58"/>
    </location>
</feature>
<feature type="helix" evidence="1">
    <location>
        <begin position="59"/>
        <end position="66"/>
    </location>
</feature>
<feature type="helix" evidence="1">
    <location>
        <begin position="67"/>
        <end position="69"/>
    </location>
</feature>
<feature type="strand" evidence="1">
    <location>
        <begin position="70"/>
        <end position="78"/>
    </location>
</feature>
<feature type="helix" evidence="1">
    <location>
        <begin position="80"/>
        <end position="85"/>
    </location>
</feature>
<feature type="strand" evidence="1">
    <location>
        <begin position="90"/>
        <end position="96"/>
    </location>
</feature>
<feature type="helix" evidence="1">
    <location>
        <begin position="97"/>
        <end position="105"/>
    </location>
</feature>
<feature type="strand" evidence="1">
    <location>
        <begin position="112"/>
        <end position="116"/>
    </location>
</feature>
<feature type="helix" evidence="1">
    <location>
        <begin position="125"/>
        <end position="128"/>
    </location>
</feature>
<feature type="strand" evidence="1">
    <location>
        <begin position="134"/>
        <end position="139"/>
    </location>
</feature>
<feature type="helix" evidence="1">
    <location>
        <begin position="147"/>
        <end position="152"/>
    </location>
</feature>
<feature type="helix" evidence="1">
    <location>
        <begin position="155"/>
        <end position="159"/>
    </location>
</feature>
<feature type="turn" evidence="1">
    <location>
        <begin position="160"/>
        <end position="165"/>
    </location>
</feature>
<feature type="strand" evidence="1">
    <location>
        <begin position="166"/>
        <end position="175"/>
    </location>
</feature>
<feature type="helix" evidence="1">
    <location>
        <begin position="185"/>
        <end position="201"/>
    </location>
</feature>
<feature type="strand" evidence="1">
    <location>
        <begin position="206"/>
        <end position="211"/>
    </location>
</feature>
<feature type="helix" evidence="1">
    <location>
        <begin position="216"/>
        <end position="221"/>
    </location>
</feature>
<feature type="helix" evidence="1">
    <location>
        <begin position="226"/>
        <end position="233"/>
    </location>
</feature>
<feature type="strand" evidence="1">
    <location>
        <begin position="235"/>
        <end position="244"/>
    </location>
</feature>
<feature type="helix" evidence="1">
    <location>
        <begin position="247"/>
        <end position="259"/>
    </location>
</feature>
<feature type="strand" evidence="1">
    <location>
        <begin position="261"/>
        <end position="267"/>
    </location>
</feature>
<organism>
    <name type="scientific">Methanocaldococcus jannaschii (strain ATCC 43067 / DSM 2661 / JAL-1 / JCM 10045 / NBRC 100440)</name>
    <name type="common">Methanococcus jannaschii</name>
    <dbReference type="NCBI Taxonomy" id="243232"/>
    <lineage>
        <taxon>Archaea</taxon>
        <taxon>Methanobacteriati</taxon>
        <taxon>Methanobacteriota</taxon>
        <taxon>Methanomada group</taxon>
        <taxon>Methanococci</taxon>
        <taxon>Methanococcales</taxon>
        <taxon>Methanocaldococcaceae</taxon>
        <taxon>Methanocaldococcus</taxon>
    </lineage>
</organism>
<accession>Q57913</accession>
<evidence type="ECO:0007829" key="1">
    <source>
        <dbReference type="PDB" id="5D4V"/>
    </source>
</evidence>
<keyword id="KW-0002">3D-structure</keyword>
<keyword id="KW-1185">Reference proteome</keyword>
<proteinExistence type="evidence at protein level"/>
<dbReference type="EMBL" id="L77117">
    <property type="protein sequence ID" value="AAB98480.1"/>
    <property type="molecule type" value="Genomic_DNA"/>
</dbReference>
<dbReference type="PIR" id="A64361">
    <property type="entry name" value="A64361"/>
</dbReference>
<dbReference type="PDB" id="5D4T">
    <property type="method" value="X-ray"/>
    <property type="resolution" value="2.90 A"/>
    <property type="chains" value="A/B/C/D/E/F/G/H=1-268"/>
</dbReference>
<dbReference type="PDB" id="5D4U">
    <property type="method" value="X-ray"/>
    <property type="resolution" value="2.00 A"/>
    <property type="chains" value="A/B/C/D=1-268"/>
</dbReference>
<dbReference type="PDB" id="5D4V">
    <property type="method" value="X-ray"/>
    <property type="resolution" value="1.60 A"/>
    <property type="chains" value="A/B/C/D=1-268"/>
</dbReference>
<dbReference type="PDB" id="5D5O">
    <property type="method" value="X-ray"/>
    <property type="resolution" value="2.70 A"/>
    <property type="chains" value="A/B/C/D/E/F/G/H=1-268"/>
</dbReference>
<dbReference type="PDB" id="5D5T">
    <property type="method" value="X-ray"/>
    <property type="resolution" value="2.40 A"/>
    <property type="chains" value="A/B/C/D=1-268"/>
</dbReference>
<dbReference type="PDBsum" id="5D4T"/>
<dbReference type="PDBsum" id="5D4U"/>
<dbReference type="PDBsum" id="5D4V"/>
<dbReference type="PDBsum" id="5D5O"/>
<dbReference type="PDBsum" id="5D5T"/>
<dbReference type="SMR" id="Q57913"/>
<dbReference type="FunCoup" id="Q57913">
    <property type="interactions" value="1"/>
</dbReference>
<dbReference type="STRING" id="243232.MJ_0489"/>
<dbReference type="PaxDb" id="243232-MJ_0489"/>
<dbReference type="EnsemblBacteria" id="AAB98480">
    <property type="protein sequence ID" value="AAB98480"/>
    <property type="gene ID" value="MJ_0489"/>
</dbReference>
<dbReference type="KEGG" id="mja:MJ_0489"/>
<dbReference type="eggNOG" id="arCOG04864">
    <property type="taxonomic scope" value="Archaea"/>
</dbReference>
<dbReference type="HOGENOM" id="CLU_081185_0_0_2"/>
<dbReference type="InParanoid" id="Q57913"/>
<dbReference type="Proteomes" id="UP000000805">
    <property type="component" value="Chromosome"/>
</dbReference>
<dbReference type="InterPro" id="IPR009573">
    <property type="entry name" value="HcgC"/>
</dbReference>
<dbReference type="Pfam" id="PF06690">
    <property type="entry name" value="HcgC"/>
    <property type="match status" value="1"/>
</dbReference>
<dbReference type="PIRSF" id="PIRSF019265">
    <property type="entry name" value="DUF1188"/>
    <property type="match status" value="1"/>
</dbReference>
<reference key="1">
    <citation type="journal article" date="1996" name="Science">
        <title>Complete genome sequence of the methanogenic archaeon, Methanococcus jannaschii.</title>
        <authorList>
            <person name="Bult C.J."/>
            <person name="White O."/>
            <person name="Olsen G.J."/>
            <person name="Zhou L."/>
            <person name="Fleischmann R.D."/>
            <person name="Sutton G.G."/>
            <person name="Blake J.A."/>
            <person name="FitzGerald L.M."/>
            <person name="Clayton R.A."/>
            <person name="Gocayne J.D."/>
            <person name="Kerlavage A.R."/>
            <person name="Dougherty B.A."/>
            <person name="Tomb J.-F."/>
            <person name="Adams M.D."/>
            <person name="Reich C.I."/>
            <person name="Overbeek R."/>
            <person name="Kirkness E.F."/>
            <person name="Weinstock K.G."/>
            <person name="Merrick J.M."/>
            <person name="Glodek A."/>
            <person name="Scott J.L."/>
            <person name="Geoghagen N.S.M."/>
            <person name="Weidman J.F."/>
            <person name="Fuhrmann J.L."/>
            <person name="Nguyen D."/>
            <person name="Utterback T.R."/>
            <person name="Kelley J.M."/>
            <person name="Peterson J.D."/>
            <person name="Sadow P.W."/>
            <person name="Hanna M.C."/>
            <person name="Cotton M.D."/>
            <person name="Roberts K.M."/>
            <person name="Hurst M.A."/>
            <person name="Kaine B.P."/>
            <person name="Borodovsky M."/>
            <person name="Klenk H.-P."/>
            <person name="Fraser C.M."/>
            <person name="Smith H.O."/>
            <person name="Woese C.R."/>
            <person name="Venter J.C."/>
        </authorList>
    </citation>
    <scope>NUCLEOTIDE SEQUENCE [LARGE SCALE GENOMIC DNA]</scope>
    <source>
        <strain>ATCC 43067 / DSM 2661 / JAL-1 / JCM 10045 / NBRC 100440</strain>
    </source>
</reference>